<protein>
    <recommendedName>
        <fullName>Mating-type protein MAT-1</fullName>
    </recommendedName>
</protein>
<feature type="chain" id="PRO_0000206010" description="Mating-type protein MAT-1">
    <location>
        <begin position="1"/>
        <end position="354"/>
    </location>
</feature>
<feature type="DNA-binding region" description="Alpha box" evidence="2">
    <location>
        <begin position="60"/>
        <end position="117"/>
    </location>
</feature>
<reference key="1">
    <citation type="journal article" date="1999" name="Proc. Natl. Acad. Sci. U.S.A.">
        <title>Evolution of the fungal self-fertile reproductive life style from self-sterile ancestors.</title>
        <authorList>
            <person name="Yun S.H."/>
            <person name="Berbee M.L."/>
            <person name="Yoder O.C."/>
            <person name="Turgeon B.G."/>
        </authorList>
    </citation>
    <scope>NUCLEOTIDE SEQUENCE [GENOMIC DNA]</scope>
    <source>
        <strain>88109-1</strain>
    </source>
</reference>
<accession>Q9Y8D1</accession>
<dbReference type="EMBL" id="AF129744">
    <property type="protein sequence ID" value="AAD33445.1"/>
    <property type="molecule type" value="Genomic_DNA"/>
</dbReference>
<dbReference type="GO" id="GO:0005634">
    <property type="term" value="C:nucleus"/>
    <property type="evidence" value="ECO:0007669"/>
    <property type="project" value="UniProtKB-SubCell"/>
</dbReference>
<dbReference type="GO" id="GO:0008301">
    <property type="term" value="F:DNA binding, bending"/>
    <property type="evidence" value="ECO:0007669"/>
    <property type="project" value="InterPro"/>
</dbReference>
<dbReference type="GO" id="GO:0045895">
    <property type="term" value="P:positive regulation of mating-type specific transcription, DNA-templated"/>
    <property type="evidence" value="ECO:0007669"/>
    <property type="project" value="InterPro"/>
</dbReference>
<dbReference type="GO" id="GO:0007338">
    <property type="term" value="P:single fertilization"/>
    <property type="evidence" value="ECO:0007669"/>
    <property type="project" value="UniProtKB-KW"/>
</dbReference>
<dbReference type="InterPro" id="IPR006856">
    <property type="entry name" value="MATalpha_HMGbox"/>
</dbReference>
<dbReference type="Pfam" id="PF04769">
    <property type="entry name" value="MATalpha_HMGbox"/>
    <property type="match status" value="1"/>
</dbReference>
<dbReference type="PROSITE" id="PS51325">
    <property type="entry name" value="ALPHA_BOX"/>
    <property type="match status" value="1"/>
</dbReference>
<keyword id="KW-0238">DNA-binding</keyword>
<keyword id="KW-0278">Fertilization</keyword>
<keyword id="KW-0539">Nucleus</keyword>
<keyword id="KW-0804">Transcription</keyword>
<keyword id="KW-0805">Transcription regulation</keyword>
<gene>
    <name type="primary">MAT1</name>
</gene>
<evidence type="ECO:0000250" key="1">
    <source>
        <dbReference type="UniProtKB" id="P0CY06"/>
    </source>
</evidence>
<evidence type="ECO:0000255" key="2">
    <source>
        <dbReference type="PROSITE-ProRule" id="PRU00655"/>
    </source>
</evidence>
<name>MAT1_COCCY</name>
<organism>
    <name type="scientific">Cochliobolus cymbopogonis</name>
    <name type="common">Curvularia cymbopogonis</name>
    <dbReference type="NCBI Taxonomy" id="90976"/>
    <lineage>
        <taxon>Eukaryota</taxon>
        <taxon>Fungi</taxon>
        <taxon>Dikarya</taxon>
        <taxon>Ascomycota</taxon>
        <taxon>Pezizomycotina</taxon>
        <taxon>Dothideomycetes</taxon>
        <taxon>Pleosporomycetidae</taxon>
        <taxon>Pleosporales</taxon>
        <taxon>Pleosporineae</taxon>
        <taxon>Pleosporaceae</taxon>
        <taxon>Curvularia</taxon>
    </lineage>
</organism>
<sequence>MASAREPTEDEIAKFLATRTSSQILQLMRCIREPAAQFAFTAKLLTFNSVKSAKPTVPPKAKKALNAFVGFRCYYIAIPAFKQWPMKKLSNLISLLWDRDPNKSLWSLMAKAWSNIRDQVGKDQAPLDEFFDIICSHLKLPDPASYLDLHGWILIVNDQGDPTLVESIDSKSASVGSSHIDLALSVEDIIAFVRNAGYAPTYIPNDNITSPTFLGQLANSPALEEDQAVAEEYDTPMADTSSASEFQQSLQREMAITEAAASVVGPDPLPDFDFTPFYESVNNLIVEHMAMEQANAGYTQGTQLSNHLVVDSGKAYLGMNDFVVDLPELIDYDAFHFGGNEDVTLPMFDDITYY</sequence>
<comment type="function">
    <text evidence="1">Mating type proteins are sequence specific DNA-binding proteins that act as master switches in fungal differentiation by controlling gene expression in a cell type-specific fashion. Transcriptional activator that induces the transcription of alpha-specific genes.</text>
</comment>
<comment type="subcellular location">
    <subcellularLocation>
        <location evidence="2">Nucleus</location>
    </subcellularLocation>
</comment>
<comment type="similarity">
    <text evidence="2">Belongs to the MATALPHA1 family.</text>
</comment>
<proteinExistence type="inferred from homology"/>